<proteinExistence type="evidence at protein level"/>
<reference key="1">
    <citation type="journal article" date="2003" name="Biochem. Genet.">
        <title>Cloning, expression, and genomic structure of a novel human Rap2 interacting gene (RPIP9).</title>
        <authorList>
            <person name="Wang S."/>
            <person name="Zhang Z."/>
            <person name="Ying K."/>
            <person name="Chen J.-Z."/>
            <person name="Meng X.-F."/>
            <person name="Yang Q.-S."/>
            <person name="Xie Y."/>
            <person name="Mao Y.-M."/>
        </authorList>
    </citation>
    <scope>NUCLEOTIDE SEQUENCE [MRNA] (ISOFORM 2)</scope>
    <scope>TISSUE SPECIFICITY</scope>
</reference>
<reference key="2">
    <citation type="journal article" date="2004" name="Nat. Genet.">
        <title>Complete sequencing and characterization of 21,243 full-length human cDNAs.</title>
        <authorList>
            <person name="Ota T."/>
            <person name="Suzuki Y."/>
            <person name="Nishikawa T."/>
            <person name="Otsuki T."/>
            <person name="Sugiyama T."/>
            <person name="Irie R."/>
            <person name="Wakamatsu A."/>
            <person name="Hayashi K."/>
            <person name="Sato H."/>
            <person name="Nagai K."/>
            <person name="Kimura K."/>
            <person name="Makita H."/>
            <person name="Sekine M."/>
            <person name="Obayashi M."/>
            <person name="Nishi T."/>
            <person name="Shibahara T."/>
            <person name="Tanaka T."/>
            <person name="Ishii S."/>
            <person name="Yamamoto J."/>
            <person name="Saito K."/>
            <person name="Kawai Y."/>
            <person name="Isono Y."/>
            <person name="Nakamura Y."/>
            <person name="Nagahari K."/>
            <person name="Murakami K."/>
            <person name="Yasuda T."/>
            <person name="Iwayanagi T."/>
            <person name="Wagatsuma M."/>
            <person name="Shiratori A."/>
            <person name="Sudo H."/>
            <person name="Hosoiri T."/>
            <person name="Kaku Y."/>
            <person name="Kodaira H."/>
            <person name="Kondo H."/>
            <person name="Sugawara M."/>
            <person name="Takahashi M."/>
            <person name="Kanda K."/>
            <person name="Yokoi T."/>
            <person name="Furuya T."/>
            <person name="Kikkawa E."/>
            <person name="Omura Y."/>
            <person name="Abe K."/>
            <person name="Kamihara K."/>
            <person name="Katsuta N."/>
            <person name="Sato K."/>
            <person name="Tanikawa M."/>
            <person name="Yamazaki M."/>
            <person name="Ninomiya K."/>
            <person name="Ishibashi T."/>
            <person name="Yamashita H."/>
            <person name="Murakawa K."/>
            <person name="Fujimori K."/>
            <person name="Tanai H."/>
            <person name="Kimata M."/>
            <person name="Watanabe M."/>
            <person name="Hiraoka S."/>
            <person name="Chiba Y."/>
            <person name="Ishida S."/>
            <person name="Ono Y."/>
            <person name="Takiguchi S."/>
            <person name="Watanabe S."/>
            <person name="Yosida M."/>
            <person name="Hotuta T."/>
            <person name="Kusano J."/>
            <person name="Kanehori K."/>
            <person name="Takahashi-Fujii A."/>
            <person name="Hara H."/>
            <person name="Tanase T.-O."/>
            <person name="Nomura Y."/>
            <person name="Togiya S."/>
            <person name="Komai F."/>
            <person name="Hara R."/>
            <person name="Takeuchi K."/>
            <person name="Arita M."/>
            <person name="Imose N."/>
            <person name="Musashino K."/>
            <person name="Yuuki H."/>
            <person name="Oshima A."/>
            <person name="Sasaki N."/>
            <person name="Aotsuka S."/>
            <person name="Yoshikawa Y."/>
            <person name="Matsunawa H."/>
            <person name="Ichihara T."/>
            <person name="Shiohata N."/>
            <person name="Sano S."/>
            <person name="Moriya S."/>
            <person name="Momiyama H."/>
            <person name="Satoh N."/>
            <person name="Takami S."/>
            <person name="Terashima Y."/>
            <person name="Suzuki O."/>
            <person name="Nakagawa S."/>
            <person name="Senoh A."/>
            <person name="Mizoguchi H."/>
            <person name="Goto Y."/>
            <person name="Shimizu F."/>
            <person name="Wakebe H."/>
            <person name="Hishigaki H."/>
            <person name="Watanabe T."/>
            <person name="Sugiyama A."/>
            <person name="Takemoto M."/>
            <person name="Kawakami B."/>
            <person name="Yamazaki M."/>
            <person name="Watanabe K."/>
            <person name="Kumagai A."/>
            <person name="Itakura S."/>
            <person name="Fukuzumi Y."/>
            <person name="Fujimori Y."/>
            <person name="Komiyama M."/>
            <person name="Tashiro H."/>
            <person name="Tanigami A."/>
            <person name="Fujiwara T."/>
            <person name="Ono T."/>
            <person name="Yamada K."/>
            <person name="Fujii Y."/>
            <person name="Ozaki K."/>
            <person name="Hirao M."/>
            <person name="Ohmori Y."/>
            <person name="Kawabata A."/>
            <person name="Hikiji T."/>
            <person name="Kobatake N."/>
            <person name="Inagaki H."/>
            <person name="Ikema Y."/>
            <person name="Okamoto S."/>
            <person name="Okitani R."/>
            <person name="Kawakami T."/>
            <person name="Noguchi S."/>
            <person name="Itoh T."/>
            <person name="Shigeta K."/>
            <person name="Senba T."/>
            <person name="Matsumura K."/>
            <person name="Nakajima Y."/>
            <person name="Mizuno T."/>
            <person name="Morinaga M."/>
            <person name="Sasaki M."/>
            <person name="Togashi T."/>
            <person name="Oyama M."/>
            <person name="Hata H."/>
            <person name="Watanabe M."/>
            <person name="Komatsu T."/>
            <person name="Mizushima-Sugano J."/>
            <person name="Satoh T."/>
            <person name="Shirai Y."/>
            <person name="Takahashi Y."/>
            <person name="Nakagawa K."/>
            <person name="Okumura K."/>
            <person name="Nagase T."/>
            <person name="Nomura N."/>
            <person name="Kikuchi H."/>
            <person name="Masuho Y."/>
            <person name="Yamashita R."/>
            <person name="Nakai K."/>
            <person name="Yada T."/>
            <person name="Nakamura Y."/>
            <person name="Ohara O."/>
            <person name="Isogai T."/>
            <person name="Sugano S."/>
        </authorList>
    </citation>
    <scope>NUCLEOTIDE SEQUENCE [LARGE SCALE MRNA] (ISOFORMS 1; 3 AND 5)</scope>
    <source>
        <tissue>Brain</tissue>
        <tissue>Cerebellum</tissue>
    </source>
</reference>
<reference key="3">
    <citation type="journal article" date="2003" name="Nature">
        <title>The DNA sequence of human chromosome 7.</title>
        <authorList>
            <person name="Hillier L.W."/>
            <person name="Fulton R.S."/>
            <person name="Fulton L.A."/>
            <person name="Graves T.A."/>
            <person name="Pepin K.H."/>
            <person name="Wagner-McPherson C."/>
            <person name="Layman D."/>
            <person name="Maas J."/>
            <person name="Jaeger S."/>
            <person name="Walker R."/>
            <person name="Wylie K."/>
            <person name="Sekhon M."/>
            <person name="Becker M.C."/>
            <person name="O'Laughlin M.D."/>
            <person name="Schaller M.E."/>
            <person name="Fewell G.A."/>
            <person name="Delehaunty K.D."/>
            <person name="Miner T.L."/>
            <person name="Nash W.E."/>
            <person name="Cordes M."/>
            <person name="Du H."/>
            <person name="Sun H."/>
            <person name="Edwards J."/>
            <person name="Bradshaw-Cordum H."/>
            <person name="Ali J."/>
            <person name="Andrews S."/>
            <person name="Isak A."/>
            <person name="Vanbrunt A."/>
            <person name="Nguyen C."/>
            <person name="Du F."/>
            <person name="Lamar B."/>
            <person name="Courtney L."/>
            <person name="Kalicki J."/>
            <person name="Ozersky P."/>
            <person name="Bielicki L."/>
            <person name="Scott K."/>
            <person name="Holmes A."/>
            <person name="Harkins R."/>
            <person name="Harris A."/>
            <person name="Strong C.M."/>
            <person name="Hou S."/>
            <person name="Tomlinson C."/>
            <person name="Dauphin-Kohlberg S."/>
            <person name="Kozlowicz-Reilly A."/>
            <person name="Leonard S."/>
            <person name="Rohlfing T."/>
            <person name="Rock S.M."/>
            <person name="Tin-Wollam A.-M."/>
            <person name="Abbott A."/>
            <person name="Minx P."/>
            <person name="Maupin R."/>
            <person name="Strowmatt C."/>
            <person name="Latreille P."/>
            <person name="Miller N."/>
            <person name="Johnson D."/>
            <person name="Murray J."/>
            <person name="Woessner J.P."/>
            <person name="Wendl M.C."/>
            <person name="Yang S.-P."/>
            <person name="Schultz B.R."/>
            <person name="Wallis J.W."/>
            <person name="Spieth J."/>
            <person name="Bieri T.A."/>
            <person name="Nelson J.O."/>
            <person name="Berkowicz N."/>
            <person name="Wohldmann P.E."/>
            <person name="Cook L.L."/>
            <person name="Hickenbotham M.T."/>
            <person name="Eldred J."/>
            <person name="Williams D."/>
            <person name="Bedell J.A."/>
            <person name="Mardis E.R."/>
            <person name="Clifton S.W."/>
            <person name="Chissoe S.L."/>
            <person name="Marra M.A."/>
            <person name="Raymond C."/>
            <person name="Haugen E."/>
            <person name="Gillett W."/>
            <person name="Zhou Y."/>
            <person name="James R."/>
            <person name="Phelps K."/>
            <person name="Iadanoto S."/>
            <person name="Bubb K."/>
            <person name="Simms E."/>
            <person name="Levy R."/>
            <person name="Clendenning J."/>
            <person name="Kaul R."/>
            <person name="Kent W.J."/>
            <person name="Furey T.S."/>
            <person name="Baertsch R.A."/>
            <person name="Brent M.R."/>
            <person name="Keibler E."/>
            <person name="Flicek P."/>
            <person name="Bork P."/>
            <person name="Suyama M."/>
            <person name="Bailey J.A."/>
            <person name="Portnoy M.E."/>
            <person name="Torrents D."/>
            <person name="Chinwalla A.T."/>
            <person name="Gish W.R."/>
            <person name="Eddy S.R."/>
            <person name="McPherson J.D."/>
            <person name="Olson M.V."/>
            <person name="Eichler E.E."/>
            <person name="Green E.D."/>
            <person name="Waterston R.H."/>
            <person name="Wilson R.K."/>
        </authorList>
    </citation>
    <scope>NUCLEOTIDE SEQUENCE [LARGE SCALE GENOMIC DNA]</scope>
</reference>
<reference key="4">
    <citation type="journal article" date="2003" name="Science">
        <title>Human chromosome 7: DNA sequence and biology.</title>
        <authorList>
            <person name="Scherer S.W."/>
            <person name="Cheung J."/>
            <person name="MacDonald J.R."/>
            <person name="Osborne L.R."/>
            <person name="Nakabayashi K."/>
            <person name="Herbrick J.-A."/>
            <person name="Carson A.R."/>
            <person name="Parker-Katiraee L."/>
            <person name="Skaug J."/>
            <person name="Khaja R."/>
            <person name="Zhang J."/>
            <person name="Hudek A.K."/>
            <person name="Li M."/>
            <person name="Haddad M."/>
            <person name="Duggan G.E."/>
            <person name="Fernandez B.A."/>
            <person name="Kanematsu E."/>
            <person name="Gentles S."/>
            <person name="Christopoulos C.C."/>
            <person name="Choufani S."/>
            <person name="Kwasnicka D."/>
            <person name="Zheng X.H."/>
            <person name="Lai Z."/>
            <person name="Nusskern D.R."/>
            <person name="Zhang Q."/>
            <person name="Gu Z."/>
            <person name="Lu F."/>
            <person name="Zeesman S."/>
            <person name="Nowaczyk M.J."/>
            <person name="Teshima I."/>
            <person name="Chitayat D."/>
            <person name="Shuman C."/>
            <person name="Weksberg R."/>
            <person name="Zackai E.H."/>
            <person name="Grebe T.A."/>
            <person name="Cox S.R."/>
            <person name="Kirkpatrick S.J."/>
            <person name="Rahman N."/>
            <person name="Friedman J.M."/>
            <person name="Heng H.H.Q."/>
            <person name="Pelicci P.G."/>
            <person name="Lo-Coco F."/>
            <person name="Belloni E."/>
            <person name="Shaffer L.G."/>
            <person name="Pober B."/>
            <person name="Morton C.C."/>
            <person name="Gusella J.F."/>
            <person name="Bruns G.A.P."/>
            <person name="Korf B.R."/>
            <person name="Quade B.J."/>
            <person name="Ligon A.H."/>
            <person name="Ferguson H."/>
            <person name="Higgins A.W."/>
            <person name="Leach N.T."/>
            <person name="Herrick S.R."/>
            <person name="Lemyre E."/>
            <person name="Farra C.G."/>
            <person name="Kim H.-G."/>
            <person name="Summers A.M."/>
            <person name="Gripp K.W."/>
            <person name="Roberts W."/>
            <person name="Szatmari P."/>
            <person name="Winsor E.J.T."/>
            <person name="Grzeschik K.-H."/>
            <person name="Teebi A."/>
            <person name="Minassian B.A."/>
            <person name="Kere J."/>
            <person name="Armengol L."/>
            <person name="Pujana M.A."/>
            <person name="Estivill X."/>
            <person name="Wilson M.D."/>
            <person name="Koop B.F."/>
            <person name="Tosi S."/>
            <person name="Moore G.E."/>
            <person name="Boright A.P."/>
            <person name="Zlotorynski E."/>
            <person name="Kerem B."/>
            <person name="Kroisel P.M."/>
            <person name="Petek E."/>
            <person name="Oscier D.G."/>
            <person name="Mould S.J."/>
            <person name="Doehner H."/>
            <person name="Doehner K."/>
            <person name="Rommens J.M."/>
            <person name="Vincent J.B."/>
            <person name="Venter J.C."/>
            <person name="Li P.W."/>
            <person name="Mural R.J."/>
            <person name="Adams M.D."/>
            <person name="Tsui L.-C."/>
        </authorList>
    </citation>
    <scope>NUCLEOTIDE SEQUENCE [LARGE SCALE GENOMIC DNA]</scope>
</reference>
<reference key="5">
    <citation type="submission" date="2005-09" db="EMBL/GenBank/DDBJ databases">
        <authorList>
            <person name="Mural R.J."/>
            <person name="Istrail S."/>
            <person name="Sutton G.G."/>
            <person name="Florea L."/>
            <person name="Halpern A.L."/>
            <person name="Mobarry C.M."/>
            <person name="Lippert R."/>
            <person name="Walenz B."/>
            <person name="Shatkay H."/>
            <person name="Dew I."/>
            <person name="Miller J.R."/>
            <person name="Flanigan M.J."/>
            <person name="Edwards N.J."/>
            <person name="Bolanos R."/>
            <person name="Fasulo D."/>
            <person name="Halldorsson B.V."/>
            <person name="Hannenhalli S."/>
            <person name="Turner R."/>
            <person name="Yooseph S."/>
            <person name="Lu F."/>
            <person name="Nusskern D.R."/>
            <person name="Shue B.C."/>
            <person name="Zheng X.H."/>
            <person name="Zhong F."/>
            <person name="Delcher A.L."/>
            <person name="Huson D.H."/>
            <person name="Kravitz S.A."/>
            <person name="Mouchard L."/>
            <person name="Reinert K."/>
            <person name="Remington K.A."/>
            <person name="Clark A.G."/>
            <person name="Waterman M.S."/>
            <person name="Eichler E.E."/>
            <person name="Adams M.D."/>
            <person name="Hunkapiller M.W."/>
            <person name="Myers E.W."/>
            <person name="Venter J.C."/>
        </authorList>
    </citation>
    <scope>NUCLEOTIDE SEQUENCE [LARGE SCALE GENOMIC DNA]</scope>
</reference>
<reference key="6">
    <citation type="journal article" date="2004" name="Genome Res.">
        <title>The status, quality, and expansion of the NIH full-length cDNA project: the Mammalian Gene Collection (MGC).</title>
        <authorList>
            <consortium name="The MGC Project Team"/>
        </authorList>
    </citation>
    <scope>NUCLEOTIDE SEQUENCE [LARGE SCALE MRNA] (ISOFORM 4)</scope>
    <scope>VARIANTS MET-47; GLY-206 AND PRO-440</scope>
    <source>
        <tissue>Brain</tissue>
    </source>
</reference>
<reference key="7">
    <citation type="journal article" date="2005" name="Int. J. Cancer">
        <title>Expression of RPIP9 (Rap2 interacting protein 9) is activated in breast carcinoma and correlates with a poor prognosis.</title>
        <authorList>
            <person name="Raguz S."/>
            <person name="De Bella M.T."/>
            <person name="Slade M.J."/>
            <person name="Higgins C.F."/>
            <person name="Coombes R.C."/>
            <person name="Yague E."/>
        </authorList>
    </citation>
    <scope>TISSUE SPECIFICITY</scope>
</reference>
<feature type="chain" id="PRO_0000336049" description="RUN domain-containing protein 3B">
    <location>
        <begin position="1"/>
        <end position="473"/>
    </location>
</feature>
<feature type="domain" description="RUN" evidence="4">
    <location>
        <begin position="57"/>
        <end position="206"/>
    </location>
</feature>
<feature type="region of interest" description="Disordered" evidence="5">
    <location>
        <begin position="1"/>
        <end position="24"/>
    </location>
</feature>
<feature type="region of interest" description="Disordered" evidence="5">
    <location>
        <begin position="399"/>
        <end position="428"/>
    </location>
</feature>
<feature type="coiled-coil region" evidence="3">
    <location>
        <begin position="317"/>
        <end position="342"/>
    </location>
</feature>
<feature type="compositionally biased region" description="Gly residues" evidence="5">
    <location>
        <begin position="8"/>
        <end position="21"/>
    </location>
</feature>
<feature type="compositionally biased region" description="Polar residues" evidence="5">
    <location>
        <begin position="399"/>
        <end position="422"/>
    </location>
</feature>
<feature type="modified residue" description="Omega-N-methylarginine" evidence="2">
    <location>
        <position position="13"/>
    </location>
</feature>
<feature type="modified residue" description="Phosphoserine" evidence="2">
    <location>
        <position position="232"/>
    </location>
</feature>
<feature type="modified residue" description="Phosphoserine" evidence="2">
    <location>
        <position position="233"/>
    </location>
</feature>
<feature type="splice variant" id="VSP_033803" description="In isoform 3." evidence="10">
    <location>
        <begin position="1"/>
        <end position="259"/>
    </location>
</feature>
<feature type="splice variant" id="VSP_033804" description="In isoform 2." evidence="9">
    <location>
        <begin position="1"/>
        <end position="95"/>
    </location>
</feature>
<feature type="splice variant" id="VSP_033805" description="In isoform 4 and isoform 5." evidence="10 11">
    <location>
        <begin position="80"/>
        <end position="96"/>
    </location>
</feature>
<feature type="splice variant" id="VSP_033806" description="In isoform 2." evidence="9">
    <original>Q</original>
    <variation>M</variation>
    <location>
        <position position="96"/>
    </location>
</feature>
<feature type="splice variant" id="VSP_033807" description="In isoform 2, isoform 3 and isoform 4." evidence="9 10 11">
    <location>
        <begin position="337"/>
        <end position="385"/>
    </location>
</feature>
<feature type="sequence variant" id="VAR_043473" description="In dbSNP:rs17852065." evidence="7">
    <original>L</original>
    <variation>M</variation>
    <location>
        <position position="47"/>
    </location>
</feature>
<feature type="sequence variant" id="VAR_043474" description="In dbSNP:rs17852063." evidence="7">
    <original>E</original>
    <variation>G</variation>
    <location>
        <position position="206"/>
    </location>
</feature>
<feature type="sequence variant" id="VAR_043475" description="In dbSNP:rs17856673." evidence="7">
    <original>L</original>
    <variation>P</variation>
    <location>
        <position position="440"/>
    </location>
</feature>
<feature type="sequence conflict" description="In Ref. 1; AAK52313." evidence="12" ref="1">
    <original>F</original>
    <variation>V</variation>
    <location>
        <position position="102"/>
    </location>
</feature>
<feature type="sequence conflict" description="In Ref. 1; AAK52313." evidence="12" ref="1">
    <original>N</original>
    <variation>S</variation>
    <location>
        <position position="185"/>
    </location>
</feature>
<feature type="sequence conflict" description="In Ref. 1; AAK52313." evidence="12" ref="1">
    <original>S</original>
    <variation>G</variation>
    <location>
        <position position="243"/>
    </location>
</feature>
<feature type="sequence conflict" description="In Ref. 2; BAG57391." evidence="12" ref="2">
    <original>F</original>
    <variation>L</variation>
    <location>
        <position position="266"/>
    </location>
</feature>
<feature type="sequence conflict" description="In Ref. 1; AAK52313." evidence="12" ref="1">
    <original>E</original>
    <variation>G</variation>
    <location>
        <position position="412"/>
    </location>
</feature>
<evidence type="ECO:0000250" key="1"/>
<evidence type="ECO:0000250" key="2">
    <source>
        <dbReference type="UniProtKB" id="Q6PDC0"/>
    </source>
</evidence>
<evidence type="ECO:0000255" key="3"/>
<evidence type="ECO:0000255" key="4">
    <source>
        <dbReference type="PROSITE-ProRule" id="PRU00178"/>
    </source>
</evidence>
<evidence type="ECO:0000256" key="5">
    <source>
        <dbReference type="SAM" id="MobiDB-lite"/>
    </source>
</evidence>
<evidence type="ECO:0000269" key="6">
    <source>
    </source>
</evidence>
<evidence type="ECO:0000269" key="7">
    <source>
    </source>
</evidence>
<evidence type="ECO:0000269" key="8">
    <source>
    </source>
</evidence>
<evidence type="ECO:0000303" key="9">
    <source>
    </source>
</evidence>
<evidence type="ECO:0000303" key="10">
    <source>
    </source>
</evidence>
<evidence type="ECO:0000303" key="11">
    <source>
    </source>
</evidence>
<evidence type="ECO:0000305" key="12"/>
<keyword id="KW-0025">Alternative splicing</keyword>
<keyword id="KW-0175">Coiled coil</keyword>
<keyword id="KW-0488">Methylation</keyword>
<keyword id="KW-0597">Phosphoprotein</keyword>
<keyword id="KW-1267">Proteomics identification</keyword>
<keyword id="KW-1185">Reference proteome</keyword>
<protein>
    <recommendedName>
        <fullName>RUN domain-containing protein 3B</fullName>
    </recommendedName>
    <alternativeName>
        <fullName>Rap2-binding protein 9</fullName>
    </alternativeName>
    <alternativeName>
        <fullName>Rap2-interacting protein 9</fullName>
        <shortName>RPIP-9</shortName>
    </alternativeName>
</protein>
<accession>Q96NL0</accession>
<accession>B4DFD0</accession>
<accession>E9PBR4</accession>
<accession>Q8IWW5</accession>
<accession>Q8NB55</accession>
<accession>Q8TBG7</accession>
<name>RUN3B_HUMAN</name>
<organism>
    <name type="scientific">Homo sapiens</name>
    <name type="common">Human</name>
    <dbReference type="NCBI Taxonomy" id="9606"/>
    <lineage>
        <taxon>Eukaryota</taxon>
        <taxon>Metazoa</taxon>
        <taxon>Chordata</taxon>
        <taxon>Craniata</taxon>
        <taxon>Vertebrata</taxon>
        <taxon>Euteleostomi</taxon>
        <taxon>Mammalia</taxon>
        <taxon>Eutheria</taxon>
        <taxon>Euarchontoglires</taxon>
        <taxon>Primates</taxon>
        <taxon>Haplorrhini</taxon>
        <taxon>Catarrhini</taxon>
        <taxon>Hominidae</taxon>
        <taxon>Homo</taxon>
    </lineage>
</organism>
<dbReference type="EMBL" id="AY033596">
    <property type="protein sequence ID" value="AAK52313.1"/>
    <property type="molecule type" value="mRNA"/>
</dbReference>
<dbReference type="EMBL" id="AK055233">
    <property type="protein sequence ID" value="BAB70882.1"/>
    <property type="molecule type" value="mRNA"/>
</dbReference>
<dbReference type="EMBL" id="AK091536">
    <property type="protein sequence ID" value="BAC03686.1"/>
    <property type="molecule type" value="mRNA"/>
</dbReference>
<dbReference type="EMBL" id="AK294039">
    <property type="protein sequence ID" value="BAG57391.1"/>
    <property type="molecule type" value="mRNA"/>
</dbReference>
<dbReference type="EMBL" id="AC002457">
    <property type="status" value="NOT_ANNOTATED_CDS"/>
    <property type="molecule type" value="Genomic_DNA"/>
</dbReference>
<dbReference type="EMBL" id="AC003083">
    <property type="status" value="NOT_ANNOTATED_CDS"/>
    <property type="molecule type" value="Genomic_DNA"/>
</dbReference>
<dbReference type="EMBL" id="CH236949">
    <property type="protein sequence ID" value="EAL24172.1"/>
    <property type="molecule type" value="Genomic_DNA"/>
</dbReference>
<dbReference type="EMBL" id="CH471091">
    <property type="protein sequence ID" value="EAW76937.1"/>
    <property type="molecule type" value="Genomic_DNA"/>
</dbReference>
<dbReference type="EMBL" id="BC022520">
    <property type="protein sequence ID" value="AAH22520.1"/>
    <property type="status" value="ALT_FRAME"/>
    <property type="molecule type" value="mRNA"/>
</dbReference>
<dbReference type="CCDS" id="CCDS47635.1">
    <molecule id="Q96NL0-5"/>
</dbReference>
<dbReference type="CCDS" id="CCDS47636.1">
    <molecule id="Q96NL0-4"/>
</dbReference>
<dbReference type="CCDS" id="CCDS5609.1">
    <molecule id="Q96NL0-1"/>
</dbReference>
<dbReference type="RefSeq" id="NP_001127877.1">
    <molecule id="Q96NL0-5"/>
    <property type="nucleotide sequence ID" value="NM_001134405.2"/>
</dbReference>
<dbReference type="RefSeq" id="NP_001127878.1">
    <molecule id="Q96NL0-4"/>
    <property type="nucleotide sequence ID" value="NM_001134406.2"/>
</dbReference>
<dbReference type="RefSeq" id="NP_612147.1">
    <molecule id="Q96NL0-1"/>
    <property type="nucleotide sequence ID" value="NM_138290.3"/>
</dbReference>
<dbReference type="SMR" id="Q96NL0"/>
<dbReference type="BioGRID" id="127550">
    <property type="interactions" value="9"/>
</dbReference>
<dbReference type="FunCoup" id="Q96NL0">
    <property type="interactions" value="223"/>
</dbReference>
<dbReference type="IntAct" id="Q96NL0">
    <property type="interactions" value="6"/>
</dbReference>
<dbReference type="MINT" id="Q96NL0"/>
<dbReference type="STRING" id="9606.ENSP00000337732"/>
<dbReference type="iPTMnet" id="Q96NL0"/>
<dbReference type="PhosphoSitePlus" id="Q96NL0"/>
<dbReference type="BioMuta" id="RUNDC3B"/>
<dbReference type="DMDM" id="74732586"/>
<dbReference type="jPOST" id="Q96NL0"/>
<dbReference type="MassIVE" id="Q96NL0"/>
<dbReference type="PaxDb" id="9606-ENSP00000337732"/>
<dbReference type="PeptideAtlas" id="Q96NL0"/>
<dbReference type="ProteomicsDB" id="19278"/>
<dbReference type="ProteomicsDB" id="77525">
    <molecule id="Q96NL0-1"/>
</dbReference>
<dbReference type="ProteomicsDB" id="77526">
    <molecule id="Q96NL0-2"/>
</dbReference>
<dbReference type="ProteomicsDB" id="77527">
    <molecule id="Q96NL0-3"/>
</dbReference>
<dbReference type="ProteomicsDB" id="77528">
    <molecule id="Q96NL0-4"/>
</dbReference>
<dbReference type="Antibodypedia" id="45244">
    <property type="antibodies" value="55 antibodies from 16 providers"/>
</dbReference>
<dbReference type="DNASU" id="154661"/>
<dbReference type="Ensembl" id="ENST00000338056.7">
    <molecule id="Q96NL0-1"/>
    <property type="protein sequence ID" value="ENSP00000337732.3"/>
    <property type="gene ID" value="ENSG00000105784.16"/>
</dbReference>
<dbReference type="Ensembl" id="ENST00000394654.4">
    <molecule id="Q96NL0-5"/>
    <property type="protein sequence ID" value="ENSP00000378149.3"/>
    <property type="gene ID" value="ENSG00000105784.16"/>
</dbReference>
<dbReference type="Ensembl" id="ENST00000493037.5">
    <molecule id="Q96NL0-4"/>
    <property type="protein sequence ID" value="ENSP00000420394.1"/>
    <property type="gene ID" value="ENSG00000105784.16"/>
</dbReference>
<dbReference type="GeneID" id="154661"/>
<dbReference type="KEGG" id="hsa:154661"/>
<dbReference type="MANE-Select" id="ENST00000394654.4">
    <molecule id="Q96NL0-5"/>
    <property type="protein sequence ID" value="ENSP00000378149.3"/>
    <property type="RefSeq nucleotide sequence ID" value="NM_001134405.2"/>
    <property type="RefSeq protein sequence ID" value="NP_001127877.1"/>
</dbReference>
<dbReference type="UCSC" id="uc003ujb.4">
    <molecule id="Q96NL0-1"/>
    <property type="organism name" value="human"/>
</dbReference>
<dbReference type="AGR" id="HGNC:30286"/>
<dbReference type="CTD" id="154661"/>
<dbReference type="DisGeNET" id="154661"/>
<dbReference type="GeneCards" id="RUNDC3B"/>
<dbReference type="HGNC" id="HGNC:30286">
    <property type="gene designation" value="RUNDC3B"/>
</dbReference>
<dbReference type="HPA" id="ENSG00000105784">
    <property type="expression patterns" value="Tissue enhanced (adrenal gland, liver)"/>
</dbReference>
<dbReference type="MIM" id="617295">
    <property type="type" value="gene"/>
</dbReference>
<dbReference type="neXtProt" id="NX_Q96NL0"/>
<dbReference type="OpenTargets" id="ENSG00000105784"/>
<dbReference type="PharmGKB" id="PA162402278"/>
<dbReference type="VEuPathDB" id="HostDB:ENSG00000105784"/>
<dbReference type="eggNOG" id="KOG4381">
    <property type="taxonomic scope" value="Eukaryota"/>
</dbReference>
<dbReference type="GeneTree" id="ENSGT00940000159175"/>
<dbReference type="HOGENOM" id="CLU_045987_0_0_1"/>
<dbReference type="InParanoid" id="Q96NL0"/>
<dbReference type="OMA" id="KQWYDKS"/>
<dbReference type="OrthoDB" id="10029904at2759"/>
<dbReference type="PAN-GO" id="Q96NL0">
    <property type="GO annotations" value="0 GO annotations based on evolutionary models"/>
</dbReference>
<dbReference type="PhylomeDB" id="Q96NL0"/>
<dbReference type="TreeFam" id="TF323904"/>
<dbReference type="PathwayCommons" id="Q96NL0"/>
<dbReference type="SignaLink" id="Q96NL0"/>
<dbReference type="BioGRID-ORCS" id="154661">
    <property type="hits" value="8 hits in 1142 CRISPR screens"/>
</dbReference>
<dbReference type="ChiTaRS" id="RUNDC3B">
    <property type="organism name" value="human"/>
</dbReference>
<dbReference type="GenomeRNAi" id="154661"/>
<dbReference type="Pharos" id="Q96NL0">
    <property type="development level" value="Tbio"/>
</dbReference>
<dbReference type="PRO" id="PR:Q96NL0"/>
<dbReference type="Proteomes" id="UP000005640">
    <property type="component" value="Chromosome 7"/>
</dbReference>
<dbReference type="RNAct" id="Q96NL0">
    <property type="molecule type" value="protein"/>
</dbReference>
<dbReference type="Bgee" id="ENSG00000105784">
    <property type="expression patterns" value="Expressed in endothelial cell and 162 other cell types or tissues"/>
</dbReference>
<dbReference type="CDD" id="cd17700">
    <property type="entry name" value="RUN_RUNDC3B"/>
    <property type="match status" value="1"/>
</dbReference>
<dbReference type="Gene3D" id="1.20.58.900">
    <property type="match status" value="1"/>
</dbReference>
<dbReference type="InterPro" id="IPR004012">
    <property type="entry name" value="Run_dom"/>
</dbReference>
<dbReference type="InterPro" id="IPR037213">
    <property type="entry name" value="Run_dom_sf"/>
</dbReference>
<dbReference type="InterPro" id="IPR047339">
    <property type="entry name" value="RUN_RUNDC3B"/>
</dbReference>
<dbReference type="InterPro" id="IPR047340">
    <property type="entry name" value="RUNDC3A_B"/>
</dbReference>
<dbReference type="PANTHER" id="PTHR46251">
    <property type="entry name" value="RUN DOMAIN-CONTAINING 3 PROTEIN RUNDC3"/>
    <property type="match status" value="1"/>
</dbReference>
<dbReference type="PANTHER" id="PTHR46251:SF1">
    <property type="entry name" value="RUN DOMAIN-CONTAINING PROTEIN 3B"/>
    <property type="match status" value="1"/>
</dbReference>
<dbReference type="Pfam" id="PF02759">
    <property type="entry name" value="RUN"/>
    <property type="match status" value="1"/>
</dbReference>
<dbReference type="SMART" id="SM00593">
    <property type="entry name" value="RUN"/>
    <property type="match status" value="1"/>
</dbReference>
<dbReference type="SUPFAM" id="SSF140741">
    <property type="entry name" value="RUN domain-like"/>
    <property type="match status" value="1"/>
</dbReference>
<dbReference type="PROSITE" id="PS50826">
    <property type="entry name" value="RUN"/>
    <property type="match status" value="1"/>
</dbReference>
<sequence>MASRSLGGLSGIRGGGGGGGKKSLSARNAAVERRNLITVCRFSVKTLIDRSCFETIDDSSPEFNNFAAILEQILSHRLKEISQSCRWLAHLQIPLQGQVTWFGYESPRSFWDYIRVACRKVSQNCICSIENMENVSSSRAKGRAWIRVALMEKHLSEYISTALRDFKTTRRFYEDGAIVLGEEANMLAGMLLGLNAIDFSFCLKGEGLDGSFPAVIDYTPYLKYIQSSDSISSDEEELRTLGSSGSESSTPENVGPPFLMDENSWFNKCKRVKQKYQLTLEQKGYLEELLRLRENQLSESVSQNKILLQRIEDSDLAHKLEKEQLEYIIVELQDQLTVLKNNDLRSRQELTAHLTNQWPSPGALDVNAVALDTLLYRKHNKQWYEKSYQSLDQLSAEVSLSQTSLDPGQSQEGDGKQDTLNVMSEGKEDTPSLLGLCGSLTSVASYKSLTSLKSNDYLASPTTEMTSPGLTPS</sequence>
<comment type="subunit">
    <text evidence="1">Interacts with RAP2A.</text>
</comment>
<comment type="alternative products">
    <event type="alternative splicing"/>
    <isoform>
        <id>Q96NL0-1</id>
        <name>1</name>
        <sequence type="displayed"/>
    </isoform>
    <isoform>
        <id>Q96NL0-2</id>
        <name>2</name>
        <sequence type="described" ref="VSP_033804 VSP_033806 VSP_033807"/>
    </isoform>
    <isoform>
        <id>Q96NL0-3</id>
        <name>3</name>
        <sequence type="described" ref="VSP_033803 VSP_033807"/>
    </isoform>
    <isoform>
        <id>Q96NL0-4</id>
        <name>4</name>
        <sequence type="described" ref="VSP_033805 VSP_033807"/>
    </isoform>
    <isoform>
        <id>Q96NL0-5</id>
        <name>5</name>
        <sequence type="described" ref="VSP_033805"/>
    </isoform>
</comment>
<comment type="tissue specificity">
    <text evidence="6 8">Isoform 2 is expressed at high levels in brain, thymus, ovary, testis, leukocyte, liver, small intestine and prostate. Isoform 1 is expressed in the brain, testis and adrenal gland. It is activated in tumorigenic breast cancer cell lines and in the primary tumor of breast cancer patients. Activation also correlates with metastatic lymph node invasion and can be detected in metastatic epithelial cells from the lymph nodes and in the bone marrow of patients.</text>
</comment>
<comment type="similarity">
    <text evidence="12">Belongs to the RUNDC3 family.</text>
</comment>
<comment type="sequence caution" evidence="12">
    <conflict type="frameshift">
        <sequence resource="EMBL-CDS" id="AAH22520"/>
    </conflict>
</comment>
<gene>
    <name type="primary">RUNDC3B</name>
    <name type="synonym">RPIB9</name>
    <name type="synonym">RPIP9</name>
</gene>